<proteinExistence type="evidence at protein level"/>
<sequence length="334" mass="37849">MGDSILSQAEIDALLNGDSEVKDEPTASVSGESDIRPYDPNTQRRVVRERLQALEIINERFARHFRMGLFNLLRRSPDITVGAIRIQPYHEFARNLPVPTNLNLIHLKPLRGTGLVVFSPSLVFIAVDNLFGGDGRFPTKVEGREFTHTEQRVINRMLKLALEGYSDAWKAINPLEVEYVRSEMQVKFTNITTSPNDIVVNTPFHVEIGNLTGEFNICLPFSMIEPLRELLVNPPLENSRNEDQNWRDNLVRQVQHSQLELVANFADISLRLSQILKLNPGDVLPIEKPDRIIAHVDGVPVLTSQYGTLNGQYALRIEHLINPILNSLNEEQPK</sequence>
<name>FLIM_ECOLI</name>
<dbReference type="EMBL" id="M12784">
    <property type="protein sequence ID" value="AAA23786.1"/>
    <property type="molecule type" value="Genomic_DNA"/>
</dbReference>
<dbReference type="EMBL" id="U00096">
    <property type="protein sequence ID" value="AAC75012.1"/>
    <property type="molecule type" value="Genomic_DNA"/>
</dbReference>
<dbReference type="EMBL" id="AP009048">
    <property type="protein sequence ID" value="BAA15770.1"/>
    <property type="molecule type" value="Genomic_DNA"/>
</dbReference>
<dbReference type="EMBL" id="M26294">
    <property type="status" value="NOT_ANNOTATED_CDS"/>
    <property type="molecule type" value="Unassigned_DNA"/>
</dbReference>
<dbReference type="PIR" id="B29842">
    <property type="entry name" value="XMECF2"/>
</dbReference>
<dbReference type="RefSeq" id="NP_416455.1">
    <property type="nucleotide sequence ID" value="NC_000913.3"/>
</dbReference>
<dbReference type="RefSeq" id="WP_001350520.1">
    <property type="nucleotide sequence ID" value="NZ_LN832404.1"/>
</dbReference>
<dbReference type="PDB" id="1F4V">
    <property type="method" value="X-ray"/>
    <property type="resolution" value="2.22 A"/>
    <property type="chains" value="D/E/F=1-16"/>
</dbReference>
<dbReference type="PDB" id="1U8T">
    <property type="method" value="X-ray"/>
    <property type="resolution" value="1.50 A"/>
    <property type="chains" value="E/F=1-16"/>
</dbReference>
<dbReference type="PDB" id="2B1J">
    <property type="method" value="X-ray"/>
    <property type="resolution" value="2.40 A"/>
    <property type="chains" value="C/D=1-16"/>
</dbReference>
<dbReference type="PDBsum" id="1F4V"/>
<dbReference type="PDBsum" id="1U8T"/>
<dbReference type="PDBsum" id="2B1J"/>
<dbReference type="SMR" id="P06974"/>
<dbReference type="BioGRID" id="4261570">
    <property type="interactions" value="26"/>
</dbReference>
<dbReference type="BioGRID" id="850797">
    <property type="interactions" value="5"/>
</dbReference>
<dbReference type="ComplexPortal" id="CPX-1082">
    <property type="entry name" value="Flagellar Motor Switch Complex, CW variant"/>
</dbReference>
<dbReference type="ComplexPortal" id="CPX-1085">
    <property type="entry name" value="Flagellar Motor Switch Complex, CCW variant"/>
</dbReference>
<dbReference type="DIP" id="DIP-1100N"/>
<dbReference type="FunCoup" id="P06974">
    <property type="interactions" value="101"/>
</dbReference>
<dbReference type="IntAct" id="P06974">
    <property type="interactions" value="18"/>
</dbReference>
<dbReference type="MINT" id="P06974"/>
<dbReference type="STRING" id="511145.b1945"/>
<dbReference type="PaxDb" id="511145-b1945"/>
<dbReference type="EnsemblBacteria" id="AAC75012">
    <property type="protein sequence ID" value="AAC75012"/>
    <property type="gene ID" value="b1945"/>
</dbReference>
<dbReference type="GeneID" id="946442"/>
<dbReference type="KEGG" id="ecj:JW1929"/>
<dbReference type="KEGG" id="eco:b1945"/>
<dbReference type="KEGG" id="ecoc:C3026_11015"/>
<dbReference type="PATRIC" id="fig|1411691.4.peg.306"/>
<dbReference type="EchoBASE" id="EB0319"/>
<dbReference type="eggNOG" id="COG1868">
    <property type="taxonomic scope" value="Bacteria"/>
</dbReference>
<dbReference type="HOGENOM" id="CLU_052646_1_2_6"/>
<dbReference type="InParanoid" id="P06974"/>
<dbReference type="OMA" id="MRIEGRP"/>
<dbReference type="OrthoDB" id="9806941at2"/>
<dbReference type="PhylomeDB" id="P06974"/>
<dbReference type="BioCyc" id="EcoCyc:FLIM-FLAGELLAR-C-RING-SWITCH"/>
<dbReference type="EvolutionaryTrace" id="P06974"/>
<dbReference type="PRO" id="PR:P06974"/>
<dbReference type="Proteomes" id="UP000000625">
    <property type="component" value="Chromosome"/>
</dbReference>
<dbReference type="GO" id="GO:0009288">
    <property type="term" value="C:bacterial-type flagellum"/>
    <property type="evidence" value="ECO:0000303"/>
    <property type="project" value="ComplexPortal"/>
</dbReference>
<dbReference type="GO" id="GO:0009433">
    <property type="term" value="C:bacterial-type flagellum basal body, C ring"/>
    <property type="evidence" value="ECO:0000303"/>
    <property type="project" value="ComplexPortal"/>
</dbReference>
<dbReference type="GO" id="GO:0120107">
    <property type="term" value="C:bacterial-type flagellum rotor complex"/>
    <property type="evidence" value="ECO:0000303"/>
    <property type="project" value="ComplexPortal"/>
</dbReference>
<dbReference type="GO" id="GO:0005886">
    <property type="term" value="C:plasma membrane"/>
    <property type="evidence" value="ECO:0007669"/>
    <property type="project" value="UniProtKB-SubCell"/>
</dbReference>
<dbReference type="GO" id="GO:0003774">
    <property type="term" value="F:cytoskeletal motor activity"/>
    <property type="evidence" value="ECO:0007669"/>
    <property type="project" value="InterPro"/>
</dbReference>
<dbReference type="GO" id="GO:0071978">
    <property type="term" value="P:bacterial-type flagellum-dependent swarming motility"/>
    <property type="evidence" value="ECO:0000318"/>
    <property type="project" value="GO_Central"/>
</dbReference>
<dbReference type="GO" id="GO:0071977">
    <property type="term" value="P:bacterial-type flagellum-dependent swimming motility"/>
    <property type="evidence" value="ECO:0000303"/>
    <property type="project" value="ComplexPortal"/>
</dbReference>
<dbReference type="GO" id="GO:0006935">
    <property type="term" value="P:chemotaxis"/>
    <property type="evidence" value="ECO:0000303"/>
    <property type="project" value="ComplexPortal"/>
</dbReference>
<dbReference type="GO" id="GO:0050918">
    <property type="term" value="P:positive chemotaxis"/>
    <property type="evidence" value="ECO:0000318"/>
    <property type="project" value="GO_Central"/>
</dbReference>
<dbReference type="CDD" id="cd17908">
    <property type="entry name" value="FliM"/>
    <property type="match status" value="1"/>
</dbReference>
<dbReference type="Gene3D" id="3.40.1550.10">
    <property type="entry name" value="CheC-like"/>
    <property type="match status" value="1"/>
</dbReference>
<dbReference type="Gene3D" id="2.30.330.10">
    <property type="entry name" value="SpoA-like"/>
    <property type="match status" value="1"/>
</dbReference>
<dbReference type="InterPro" id="IPR028976">
    <property type="entry name" value="CheC-like_sf"/>
</dbReference>
<dbReference type="InterPro" id="IPR001689">
    <property type="entry name" value="Flag_FliM"/>
</dbReference>
<dbReference type="InterPro" id="IPR001543">
    <property type="entry name" value="FliN-like_C"/>
</dbReference>
<dbReference type="InterPro" id="IPR036429">
    <property type="entry name" value="SpoA-like_sf"/>
</dbReference>
<dbReference type="NCBIfam" id="TIGR01397">
    <property type="entry name" value="fliM_switch"/>
    <property type="match status" value="1"/>
</dbReference>
<dbReference type="PANTHER" id="PTHR30034">
    <property type="entry name" value="FLAGELLAR MOTOR SWITCH PROTEIN FLIM"/>
    <property type="match status" value="1"/>
</dbReference>
<dbReference type="PANTHER" id="PTHR30034:SF3">
    <property type="entry name" value="FLAGELLAR MOTOR SWITCH PROTEIN FLIM"/>
    <property type="match status" value="1"/>
</dbReference>
<dbReference type="Pfam" id="PF02154">
    <property type="entry name" value="FliM"/>
    <property type="match status" value="1"/>
</dbReference>
<dbReference type="Pfam" id="PF01052">
    <property type="entry name" value="FliMN_C"/>
    <property type="match status" value="1"/>
</dbReference>
<dbReference type="PIRSF" id="PIRSF002888">
    <property type="entry name" value="FliM"/>
    <property type="match status" value="1"/>
</dbReference>
<dbReference type="PRINTS" id="PR00955">
    <property type="entry name" value="FLGMOTORFLIM"/>
</dbReference>
<dbReference type="SUPFAM" id="SSF103039">
    <property type="entry name" value="CheC-like"/>
    <property type="match status" value="1"/>
</dbReference>
<dbReference type="SUPFAM" id="SSF101801">
    <property type="entry name" value="Surface presentation of antigens (SPOA)"/>
    <property type="match status" value="1"/>
</dbReference>
<feature type="chain" id="PRO_0000180928" description="Flagellar motor switch protein FliM">
    <location>
        <begin position="1"/>
        <end position="334"/>
    </location>
</feature>
<feature type="mutagenesis site" description="Decreases binding to YcgR." evidence="1">
    <original>V</original>
    <variation>D</variation>
    <location>
        <position position="153"/>
    </location>
</feature>
<feature type="mutagenesis site" description="Decreases binding to YcgR." evidence="1">
    <original>N</original>
    <variation>E</variation>
    <location>
        <position position="155"/>
    </location>
</feature>
<feature type="mutagenesis site" description="Obviates binding to YcgR." evidence="1">
    <original>R</original>
    <variation>D</variation>
    <location>
        <position position="156"/>
    </location>
</feature>
<feature type="mutagenesis site" description="Obviates binding to YcgR." evidence="1">
    <original>L</original>
    <variation>E</variation>
    <location>
        <position position="160"/>
    </location>
</feature>
<feature type="mutagenesis site" description="Decreases binding to YcgR." evidence="1">
    <original>D</original>
    <variation>R</variation>
    <location>
        <position position="167"/>
    </location>
</feature>
<feature type="mutagenesis site" description="Decreases binding to YcgR." evidence="1">
    <original>E</original>
    <variation>R</variation>
    <location>
        <position position="176"/>
    </location>
</feature>
<feature type="helix" evidence="3">
    <location>
        <begin position="8"/>
        <end position="15"/>
    </location>
</feature>
<protein>
    <recommendedName>
        <fullName>Flagellar motor switch protein FliM</fullName>
    </recommendedName>
</protein>
<gene>
    <name type="primary">fliM</name>
    <name type="synonym">cheC2</name>
    <name type="synonym">fla AII</name>
    <name type="synonym">fla QII</name>
    <name type="ordered locus">b1945</name>
    <name type="ordered locus">JW1929</name>
</gene>
<comment type="function">
    <text>FliM is one of three proteins (FliG, FliN, FliM) that forms the rotor-mounted switch complex (C ring), located at the base of the basal body. This complex interacts with the CheY and CheZ chemotaxis proteins, in addition to contacting components of the motor that determine the direction of flagellar rotation.</text>
</comment>
<comment type="subunit">
    <text evidence="1">Interacts with flagellar brake protein YcgR.</text>
</comment>
<comment type="interaction">
    <interactant intactId="EBI-560439">
        <id>P06974</id>
    </interactant>
    <interactant intactId="EBI-1126524">
        <id>P0ABZ1</id>
        <label>fliG</label>
    </interactant>
    <organismsDiffer>false</organismsDiffer>
    <experiments>16</experiments>
</comment>
<comment type="interaction">
    <interactant intactId="EBI-560439">
        <id>P06974</id>
    </interactant>
    <interactant intactId="EBI-2011987">
        <id>P15070</id>
        <label>fliN</label>
    </interactant>
    <organismsDiffer>false</organismsDiffer>
    <experiments>7</experiments>
</comment>
<comment type="interaction">
    <interactant intactId="EBI-560439">
        <id>P06974</id>
    </interactant>
    <interactant intactId="EBI-554507">
        <id>P76010</id>
        <label>ycgR</label>
    </interactant>
    <organismsDiffer>false</organismsDiffer>
    <experiments>3</experiments>
</comment>
<comment type="subcellular location">
    <subcellularLocation>
        <location>Cell inner membrane</location>
        <topology>Peripheral membrane protein</topology>
    </subcellularLocation>
    <subcellularLocation>
        <location>Bacterial flagellum basal body</location>
    </subcellularLocation>
</comment>
<comment type="similarity">
    <text evidence="2">Belongs to the FliM family.</text>
</comment>
<accession>P06974</accession>
<keyword id="KW-0002">3D-structure</keyword>
<keyword id="KW-0975">Bacterial flagellum</keyword>
<keyword id="KW-0997">Cell inner membrane</keyword>
<keyword id="KW-1003">Cell membrane</keyword>
<keyword id="KW-0145">Chemotaxis</keyword>
<keyword id="KW-0283">Flagellar rotation</keyword>
<keyword id="KW-0472">Membrane</keyword>
<keyword id="KW-1185">Reference proteome</keyword>
<evidence type="ECO:0000269" key="1">
    <source>
    </source>
</evidence>
<evidence type="ECO:0000305" key="2"/>
<evidence type="ECO:0007829" key="3">
    <source>
        <dbReference type="PDB" id="1U8T"/>
    </source>
</evidence>
<organism>
    <name type="scientific">Escherichia coli (strain K12)</name>
    <dbReference type="NCBI Taxonomy" id="83333"/>
    <lineage>
        <taxon>Bacteria</taxon>
        <taxon>Pseudomonadati</taxon>
        <taxon>Pseudomonadota</taxon>
        <taxon>Gammaproteobacteria</taxon>
        <taxon>Enterobacterales</taxon>
        <taxon>Enterobacteriaceae</taxon>
        <taxon>Escherichia</taxon>
    </lineage>
</organism>
<reference key="1">
    <citation type="journal article" date="1986" name="J. Bacteriol.">
        <title>Sequence of the flaA (cheC) locus of Escherichia coli and discovery of a new gene.</title>
        <authorList>
            <person name="Kuo S.C."/>
            <person name="Koshland D.E. Jr."/>
        </authorList>
    </citation>
    <scope>NUCLEOTIDE SEQUENCE [GENOMIC DNA]</scope>
</reference>
<reference key="2">
    <citation type="journal article" date="1996" name="DNA Res.">
        <title>A 460-kb DNA sequence of the Escherichia coli K-12 genome corresponding to the 40.1-50.0 min region on the linkage map.</title>
        <authorList>
            <person name="Itoh T."/>
            <person name="Aiba H."/>
            <person name="Baba T."/>
            <person name="Fujita K."/>
            <person name="Hayashi K."/>
            <person name="Inada T."/>
            <person name="Isono K."/>
            <person name="Kasai H."/>
            <person name="Kimura S."/>
            <person name="Kitakawa M."/>
            <person name="Kitagawa M."/>
            <person name="Makino K."/>
            <person name="Miki T."/>
            <person name="Mizobuchi K."/>
            <person name="Mori H."/>
            <person name="Mori T."/>
            <person name="Motomura K."/>
            <person name="Nakade S."/>
            <person name="Nakamura Y."/>
            <person name="Nashimoto H."/>
            <person name="Nishio Y."/>
            <person name="Oshima T."/>
            <person name="Saito N."/>
            <person name="Sampei G."/>
            <person name="Seki Y."/>
            <person name="Sivasundaram S."/>
            <person name="Tagami H."/>
            <person name="Takeda J."/>
            <person name="Takemoto K."/>
            <person name="Wada C."/>
            <person name="Yamamoto Y."/>
            <person name="Horiuchi T."/>
        </authorList>
    </citation>
    <scope>NUCLEOTIDE SEQUENCE [LARGE SCALE GENOMIC DNA]</scope>
    <source>
        <strain>K12 / W3110 / ATCC 27325 / DSM 5911</strain>
    </source>
</reference>
<reference key="3">
    <citation type="journal article" date="1997" name="Science">
        <title>The complete genome sequence of Escherichia coli K-12.</title>
        <authorList>
            <person name="Blattner F.R."/>
            <person name="Plunkett G. III"/>
            <person name="Bloch C.A."/>
            <person name="Perna N.T."/>
            <person name="Burland V."/>
            <person name="Riley M."/>
            <person name="Collado-Vides J."/>
            <person name="Glasner J.D."/>
            <person name="Rode C.K."/>
            <person name="Mayhew G.F."/>
            <person name="Gregor J."/>
            <person name="Davis N.W."/>
            <person name="Kirkpatrick H.A."/>
            <person name="Goeden M.A."/>
            <person name="Rose D.J."/>
            <person name="Mau B."/>
            <person name="Shao Y."/>
        </authorList>
    </citation>
    <scope>NUCLEOTIDE SEQUENCE [LARGE SCALE GENOMIC DNA]</scope>
    <source>
        <strain>K12 / MG1655 / ATCC 47076</strain>
    </source>
</reference>
<reference key="4">
    <citation type="journal article" date="2006" name="Mol. Syst. Biol.">
        <title>Highly accurate genome sequences of Escherichia coli K-12 strains MG1655 and W3110.</title>
        <authorList>
            <person name="Hayashi K."/>
            <person name="Morooka N."/>
            <person name="Yamamoto Y."/>
            <person name="Fujita K."/>
            <person name="Isono K."/>
            <person name="Choi S."/>
            <person name="Ohtsubo E."/>
            <person name="Baba T."/>
            <person name="Wanner B.L."/>
            <person name="Mori H."/>
            <person name="Horiuchi T."/>
        </authorList>
    </citation>
    <scope>NUCLEOTIDE SEQUENCE [LARGE SCALE GENOMIC DNA]</scope>
    <source>
        <strain>K12 / W3110 / ATCC 27325 / DSM 5911</strain>
    </source>
</reference>
<reference key="5">
    <citation type="journal article" date="1989" name="J. Bacteriol.">
        <title>DNA sequence analysis, gene product identification, and localization of flagellar motor components of Escherichia coli.</title>
        <authorList>
            <person name="Malakooti J."/>
            <person name="Komeda Y."/>
            <person name="Matsumura P."/>
        </authorList>
    </citation>
    <scope>NUCLEOTIDE SEQUENCE [GENOMIC DNA] OF 327-334</scope>
    <source>
        <strain>K12</strain>
    </source>
</reference>
<reference key="6">
    <citation type="journal article" date="2010" name="Mol. Cell">
        <title>The c-di-GMP binding protein YcgR controls flagellar motor direction and speed to affect chemotaxis by a 'backstop brake' mechanism.</title>
        <authorList>
            <person name="Paul K."/>
            <person name="Nieto V."/>
            <person name="Carlquist W.C."/>
            <person name="Blair D.F."/>
            <person name="Harshey R.M."/>
        </authorList>
    </citation>
    <scope>INTERACTION WITH YCRG</scope>
    <scope>MUTAGENESIS OF VAL-153; ASN-155; ARG-156; LEU-160; ASP-167 AND GLU-176</scope>
    <source>
        <strain>K12 / RP3098</strain>
    </source>
</reference>
<reference key="7">
    <citation type="journal article" date="2008" name="Int. Rev. Cytol.">
        <title>Flagellar motility in bacteria structure and function of flagellar motor.</title>
        <authorList>
            <person name="Terashima H."/>
            <person name="Kojima S."/>
            <person name="Homma M."/>
        </authorList>
    </citation>
    <scope>REVIEW</scope>
</reference>